<keyword id="KW-0175">Coiled coil</keyword>
<keyword id="KW-0963">Cytoplasm</keyword>
<keyword id="KW-0206">Cytoskeleton</keyword>
<keyword id="KW-1185">Reference proteome</keyword>
<keyword id="KW-0677">Repeat</keyword>
<keyword id="KW-0853">WD repeat</keyword>
<gene>
    <name type="primary">poc1a</name>
    <name type="synonym">wdr51a</name>
</gene>
<feature type="chain" id="PRO_0000420365" description="POC1 centriolar protein homolog A">
    <location>
        <begin position="1"/>
        <end position="441"/>
    </location>
</feature>
<feature type="repeat" description="WD 1">
    <location>
        <begin position="16"/>
        <end position="55"/>
    </location>
</feature>
<feature type="repeat" description="WD 2">
    <location>
        <begin position="58"/>
        <end position="97"/>
    </location>
</feature>
<feature type="repeat" description="WD 3">
    <location>
        <begin position="100"/>
        <end position="139"/>
    </location>
</feature>
<feature type="repeat" description="WD 4">
    <location>
        <begin position="142"/>
        <end position="181"/>
    </location>
</feature>
<feature type="repeat" description="WD 5">
    <location>
        <begin position="184"/>
        <end position="223"/>
    </location>
</feature>
<feature type="repeat" description="WD 6">
    <location>
        <begin position="226"/>
        <end position="265"/>
    </location>
</feature>
<feature type="repeat" description="WD 7">
    <location>
        <begin position="268"/>
        <end position="307"/>
    </location>
</feature>
<feature type="region of interest" description="Disordered" evidence="3">
    <location>
        <begin position="323"/>
        <end position="380"/>
    </location>
</feature>
<feature type="coiled-coil region" evidence="2">
    <location>
        <begin position="400"/>
        <end position="427"/>
    </location>
</feature>
<feature type="compositionally biased region" description="Basic and acidic residues" evidence="3">
    <location>
        <begin position="331"/>
        <end position="340"/>
    </location>
</feature>
<feature type="compositionally biased region" description="Basic and acidic residues" evidence="3">
    <location>
        <begin position="348"/>
        <end position="361"/>
    </location>
</feature>
<feature type="compositionally biased region" description="Basic and acidic residues" evidence="3">
    <location>
        <begin position="371"/>
        <end position="380"/>
    </location>
</feature>
<reference key="1">
    <citation type="submission" date="2006-10" db="EMBL/GenBank/DDBJ databases">
        <authorList>
            <consortium name="Sanger Xenopus tropicalis EST/cDNA project"/>
        </authorList>
    </citation>
    <scope>NUCLEOTIDE SEQUENCE [LARGE SCALE MRNA]</scope>
    <source>
        <tissue>Egg</tissue>
    </source>
</reference>
<reference key="2">
    <citation type="submission" date="2008-02" db="EMBL/GenBank/DDBJ databases">
        <authorList>
            <consortium name="NIH - Xenopus Gene Collection (XGC) project"/>
        </authorList>
    </citation>
    <scope>NUCLEOTIDE SEQUENCE [LARGE SCALE MRNA]</scope>
    <source>
        <tissue>Gastrula</tissue>
    </source>
</reference>
<comment type="function">
    <text evidence="1">May play an important role in centriole assembly and/or stability and ciliogenesis.</text>
</comment>
<comment type="subunit">
    <text evidence="1">Interacts with pat.</text>
</comment>
<comment type="subcellular location">
    <subcellularLocation>
        <location evidence="1">Cytoplasm</location>
        <location evidence="1">Cytoskeleton</location>
    </subcellularLocation>
    <text evidence="1">Colocalizes with mitochondria in cortical germ plasm islands. The mitochondrial localization may be microtubule-dependent (By similarity).</text>
</comment>
<comment type="similarity">
    <text evidence="4">Belongs to the WD repeat POC1 family.</text>
</comment>
<protein>
    <recommendedName>
        <fullName>POC1 centriolar protein homolog A</fullName>
    </recommendedName>
    <alternativeName>
        <fullName>Pat-interacting protein 2</fullName>
        <shortName>Pix2</shortName>
        <shortName>xPix2</shortName>
    </alternativeName>
    <alternativeName>
        <fullName>WD repeat-containing protein 51A</fullName>
    </alternativeName>
</protein>
<proteinExistence type="evidence at transcript level"/>
<sequence>MAGQPEDPSLERHFKGHRDTVTTVDFNPNTKQLASGSMDSCLMIWNMKPQMRAYRFVGHKDAILSVDFSPSGHLIASASRDKTVRLWVPSVKGESTVFKAHTGTVRSVSFSGDGQSLVTASDDKTIKVWTVHRQKFLFSLNQHINWVRCAKFSPDGRLIVSASDDKTIKLWDKTSRECIHSFCEHGGFVNFVDFHPSGTCIAAAATDNTVKVWDIRMNKLIQHYQVHSGVVNSLSFHPSGNYLITASNDSTLKVLDLLEGRLLYTLHGHQGPVTSVKFSREGEFFASGGSDEQVMVWKTNFDSASYADLLKYRQHDQFLNGGDYTSGVPAADRHRPERNAQTDQADDLEPRHIQMSAKDRSSPLSYTSRSIDQHHPQAEDGNLRTVASTLEHIVGQLDILTRTVGILEQRLSLTEDKLKECIDNQQATVSLSHSATKTPSF</sequence>
<organism>
    <name type="scientific">Xenopus tropicalis</name>
    <name type="common">Western clawed frog</name>
    <name type="synonym">Silurana tropicalis</name>
    <dbReference type="NCBI Taxonomy" id="8364"/>
    <lineage>
        <taxon>Eukaryota</taxon>
        <taxon>Metazoa</taxon>
        <taxon>Chordata</taxon>
        <taxon>Craniata</taxon>
        <taxon>Vertebrata</taxon>
        <taxon>Euteleostomi</taxon>
        <taxon>Amphibia</taxon>
        <taxon>Batrachia</taxon>
        <taxon>Anura</taxon>
        <taxon>Pipoidea</taxon>
        <taxon>Pipidae</taxon>
        <taxon>Xenopodinae</taxon>
        <taxon>Xenopus</taxon>
        <taxon>Silurana</taxon>
    </lineage>
</organism>
<dbReference type="EMBL" id="BC158994">
    <property type="protein sequence ID" value="AAI58995.1"/>
    <property type="molecule type" value="mRNA"/>
</dbReference>
<dbReference type="EMBL" id="CR760535">
    <property type="protein sequence ID" value="CAJ83727.1"/>
    <property type="molecule type" value="mRNA"/>
</dbReference>
<dbReference type="RefSeq" id="NP_001016608.1">
    <property type="nucleotide sequence ID" value="NM_001016608.2"/>
</dbReference>
<dbReference type="SMR" id="Q28I85"/>
<dbReference type="FunCoup" id="Q28I85">
    <property type="interactions" value="648"/>
</dbReference>
<dbReference type="STRING" id="8364.ENSXETP00000038715"/>
<dbReference type="GeneID" id="549362"/>
<dbReference type="KEGG" id="xtr:549362"/>
<dbReference type="AGR" id="Xenbase:XB-GENE-5767105"/>
<dbReference type="CTD" id="25886"/>
<dbReference type="Xenbase" id="XB-GENE-5767105">
    <property type="gene designation" value="poc1a"/>
</dbReference>
<dbReference type="InParanoid" id="Q28I85"/>
<dbReference type="OMA" id="LMIWHFK"/>
<dbReference type="OrthoDB" id="10264588at2759"/>
<dbReference type="Proteomes" id="UP000008143">
    <property type="component" value="Chromosome 4"/>
</dbReference>
<dbReference type="Bgee" id="ENSXETG00000010813">
    <property type="expression patterns" value="Expressed in 2-cell stage embryo and 9 other cell types or tissues"/>
</dbReference>
<dbReference type="GO" id="GO:0005737">
    <property type="term" value="C:cytoplasm"/>
    <property type="evidence" value="ECO:0007669"/>
    <property type="project" value="UniProtKB-KW"/>
</dbReference>
<dbReference type="GO" id="GO:0005856">
    <property type="term" value="C:cytoskeleton"/>
    <property type="evidence" value="ECO:0007669"/>
    <property type="project" value="UniProtKB-SubCell"/>
</dbReference>
<dbReference type="CDD" id="cd00200">
    <property type="entry name" value="WD40"/>
    <property type="match status" value="1"/>
</dbReference>
<dbReference type="FunFam" id="2.130.10.10:FF:000567">
    <property type="entry name" value="POC1 centriolar protein homolog A"/>
    <property type="match status" value="1"/>
</dbReference>
<dbReference type="FunFam" id="2.130.10.10:FF:000235">
    <property type="entry name" value="POC1 centriolar protein homolog B"/>
    <property type="match status" value="1"/>
</dbReference>
<dbReference type="Gene3D" id="2.130.10.10">
    <property type="entry name" value="YVTN repeat-like/Quinoprotein amine dehydrogenase"/>
    <property type="match status" value="3"/>
</dbReference>
<dbReference type="InterPro" id="IPR020472">
    <property type="entry name" value="G-protein_beta_WD-40_rep"/>
</dbReference>
<dbReference type="InterPro" id="IPR015943">
    <property type="entry name" value="WD40/YVTN_repeat-like_dom_sf"/>
</dbReference>
<dbReference type="InterPro" id="IPR019775">
    <property type="entry name" value="WD40_repeat_CS"/>
</dbReference>
<dbReference type="InterPro" id="IPR036322">
    <property type="entry name" value="WD40_repeat_dom_sf"/>
</dbReference>
<dbReference type="InterPro" id="IPR001680">
    <property type="entry name" value="WD40_rpt"/>
</dbReference>
<dbReference type="InterPro" id="IPR050505">
    <property type="entry name" value="WDR55_POC1"/>
</dbReference>
<dbReference type="PANTHER" id="PTHR44019:SF2">
    <property type="entry name" value="POC1 CENTRIOLAR PROTEIN HOMOLOG A"/>
    <property type="match status" value="1"/>
</dbReference>
<dbReference type="PANTHER" id="PTHR44019">
    <property type="entry name" value="WD REPEAT-CONTAINING PROTEIN 55"/>
    <property type="match status" value="1"/>
</dbReference>
<dbReference type="Pfam" id="PF00400">
    <property type="entry name" value="WD40"/>
    <property type="match status" value="7"/>
</dbReference>
<dbReference type="PRINTS" id="PR00320">
    <property type="entry name" value="GPROTEINBRPT"/>
</dbReference>
<dbReference type="SMART" id="SM00320">
    <property type="entry name" value="WD40"/>
    <property type="match status" value="7"/>
</dbReference>
<dbReference type="SUPFAM" id="SSF50978">
    <property type="entry name" value="WD40 repeat-like"/>
    <property type="match status" value="1"/>
</dbReference>
<dbReference type="PROSITE" id="PS00678">
    <property type="entry name" value="WD_REPEATS_1"/>
    <property type="match status" value="2"/>
</dbReference>
<dbReference type="PROSITE" id="PS50082">
    <property type="entry name" value="WD_REPEATS_2"/>
    <property type="match status" value="7"/>
</dbReference>
<dbReference type="PROSITE" id="PS50294">
    <property type="entry name" value="WD_REPEATS_REGION"/>
    <property type="match status" value="1"/>
</dbReference>
<name>POC1A_XENTR</name>
<accession>Q28I85</accession>
<evidence type="ECO:0000250" key="1"/>
<evidence type="ECO:0000255" key="2"/>
<evidence type="ECO:0000256" key="3">
    <source>
        <dbReference type="SAM" id="MobiDB-lite"/>
    </source>
</evidence>
<evidence type="ECO:0000305" key="4"/>